<dbReference type="EC" id="2.7.2.8" evidence="1"/>
<dbReference type="EMBL" id="AP008226">
    <property type="protein sequence ID" value="BAD71773.1"/>
    <property type="molecule type" value="Genomic_DNA"/>
</dbReference>
<dbReference type="RefSeq" id="WP_011229040.1">
    <property type="nucleotide sequence ID" value="NC_006461.1"/>
</dbReference>
<dbReference type="RefSeq" id="YP_145216.1">
    <property type="nucleotide sequence ID" value="NC_006461.1"/>
</dbReference>
<dbReference type="SMR" id="Q5SGY0"/>
<dbReference type="EnsemblBacteria" id="BAD71773">
    <property type="protein sequence ID" value="BAD71773"/>
    <property type="gene ID" value="BAD71773"/>
</dbReference>
<dbReference type="GeneID" id="3168085"/>
<dbReference type="KEGG" id="ttj:TTHA1950"/>
<dbReference type="PATRIC" id="fig|300852.9.peg.1922"/>
<dbReference type="eggNOG" id="COG0548">
    <property type="taxonomic scope" value="Bacteria"/>
</dbReference>
<dbReference type="HOGENOM" id="CLU_053680_1_0_0"/>
<dbReference type="PhylomeDB" id="Q5SGY0"/>
<dbReference type="UniPathway" id="UPA00068">
    <property type="reaction ID" value="UER00107"/>
</dbReference>
<dbReference type="Proteomes" id="UP000000532">
    <property type="component" value="Chromosome"/>
</dbReference>
<dbReference type="GO" id="GO:0005737">
    <property type="term" value="C:cytoplasm"/>
    <property type="evidence" value="ECO:0007669"/>
    <property type="project" value="UniProtKB-SubCell"/>
</dbReference>
<dbReference type="GO" id="GO:0003991">
    <property type="term" value="F:acetylglutamate kinase activity"/>
    <property type="evidence" value="ECO:0007669"/>
    <property type="project" value="UniProtKB-UniRule"/>
</dbReference>
<dbReference type="GO" id="GO:0005524">
    <property type="term" value="F:ATP binding"/>
    <property type="evidence" value="ECO:0007669"/>
    <property type="project" value="UniProtKB-UniRule"/>
</dbReference>
<dbReference type="GO" id="GO:0042450">
    <property type="term" value="P:arginine biosynthetic process via ornithine"/>
    <property type="evidence" value="ECO:0007669"/>
    <property type="project" value="UniProtKB-UniRule"/>
</dbReference>
<dbReference type="GO" id="GO:0006526">
    <property type="term" value="P:L-arginine biosynthetic process"/>
    <property type="evidence" value="ECO:0007669"/>
    <property type="project" value="UniProtKB-UniPathway"/>
</dbReference>
<dbReference type="CDD" id="cd04238">
    <property type="entry name" value="AAK_NAGK-like"/>
    <property type="match status" value="1"/>
</dbReference>
<dbReference type="Gene3D" id="3.40.1160.10">
    <property type="entry name" value="Acetylglutamate kinase-like"/>
    <property type="match status" value="1"/>
</dbReference>
<dbReference type="HAMAP" id="MF_00082">
    <property type="entry name" value="ArgB"/>
    <property type="match status" value="1"/>
</dbReference>
<dbReference type="InterPro" id="IPR036393">
    <property type="entry name" value="AceGlu_kinase-like_sf"/>
</dbReference>
<dbReference type="InterPro" id="IPR004662">
    <property type="entry name" value="AcgluKinase_fam"/>
</dbReference>
<dbReference type="InterPro" id="IPR037528">
    <property type="entry name" value="ArgB"/>
</dbReference>
<dbReference type="InterPro" id="IPR001048">
    <property type="entry name" value="Asp/Glu/Uridylate_kinase"/>
</dbReference>
<dbReference type="NCBIfam" id="TIGR00761">
    <property type="entry name" value="argB"/>
    <property type="match status" value="1"/>
</dbReference>
<dbReference type="PANTHER" id="PTHR23342">
    <property type="entry name" value="N-ACETYLGLUTAMATE SYNTHASE"/>
    <property type="match status" value="1"/>
</dbReference>
<dbReference type="PANTHER" id="PTHR23342:SF0">
    <property type="entry name" value="N-ACETYLGLUTAMATE SYNTHASE, MITOCHONDRIAL"/>
    <property type="match status" value="1"/>
</dbReference>
<dbReference type="Pfam" id="PF00696">
    <property type="entry name" value="AA_kinase"/>
    <property type="match status" value="1"/>
</dbReference>
<dbReference type="PIRSF" id="PIRSF000728">
    <property type="entry name" value="NAGK"/>
    <property type="match status" value="1"/>
</dbReference>
<dbReference type="SUPFAM" id="SSF53633">
    <property type="entry name" value="Carbamate kinase-like"/>
    <property type="match status" value="1"/>
</dbReference>
<gene>
    <name evidence="1" type="primary">argB</name>
    <name type="ordered locus">TTHA1950</name>
</gene>
<reference key="1">
    <citation type="submission" date="2004-11" db="EMBL/GenBank/DDBJ databases">
        <title>Complete genome sequence of Thermus thermophilus HB8.</title>
        <authorList>
            <person name="Masui R."/>
            <person name="Kurokawa K."/>
            <person name="Nakagawa N."/>
            <person name="Tokunaga F."/>
            <person name="Koyama Y."/>
            <person name="Shibata T."/>
            <person name="Oshima T."/>
            <person name="Yokoyama S."/>
            <person name="Yasunaga T."/>
            <person name="Kuramitsu S."/>
        </authorList>
    </citation>
    <scope>NUCLEOTIDE SEQUENCE [LARGE SCALE GENOMIC DNA]</scope>
    <source>
        <strain>ATCC 27634 / DSM 579 / HB8</strain>
    </source>
</reference>
<protein>
    <recommendedName>
        <fullName evidence="1">Acetylglutamate kinase</fullName>
        <ecNumber evidence="1">2.7.2.8</ecNumber>
    </recommendedName>
    <alternativeName>
        <fullName evidence="1">N-acetyl-L-glutamate 5-phosphotransferase</fullName>
    </alternativeName>
    <alternativeName>
        <fullName evidence="1">NAG kinase</fullName>
        <shortName evidence="1">NAGK</shortName>
    </alternativeName>
</protein>
<feature type="chain" id="PRO_0000264779" description="Acetylglutamate kinase">
    <location>
        <begin position="1"/>
        <end position="249"/>
    </location>
</feature>
<feature type="binding site" evidence="1">
    <location>
        <begin position="36"/>
        <end position="37"/>
    </location>
    <ligand>
        <name>substrate</name>
    </ligand>
</feature>
<feature type="binding site" evidence="1">
    <location>
        <position position="58"/>
    </location>
    <ligand>
        <name>substrate</name>
    </ligand>
</feature>
<feature type="binding site" evidence="1">
    <location>
        <position position="147"/>
    </location>
    <ligand>
        <name>substrate</name>
    </ligand>
</feature>
<feature type="site" description="Transition state stabilizer" evidence="1">
    <location>
        <position position="8"/>
    </location>
</feature>
<feature type="site" description="Transition state stabilizer" evidence="1">
    <location>
        <position position="209"/>
    </location>
</feature>
<organism>
    <name type="scientific">Thermus thermophilus (strain ATCC 27634 / DSM 579 / HB8)</name>
    <dbReference type="NCBI Taxonomy" id="300852"/>
    <lineage>
        <taxon>Bacteria</taxon>
        <taxon>Thermotogati</taxon>
        <taxon>Deinococcota</taxon>
        <taxon>Deinococci</taxon>
        <taxon>Thermales</taxon>
        <taxon>Thermaceae</taxon>
        <taxon>Thermus</taxon>
    </lineage>
</organism>
<comment type="function">
    <text evidence="1">Catalyzes the ATP-dependent phosphorylation of N-acetyl-L-glutamate.</text>
</comment>
<comment type="catalytic activity">
    <reaction evidence="1">
        <text>N-acetyl-L-glutamate + ATP = N-acetyl-L-glutamyl 5-phosphate + ADP</text>
        <dbReference type="Rhea" id="RHEA:14629"/>
        <dbReference type="ChEBI" id="CHEBI:30616"/>
        <dbReference type="ChEBI" id="CHEBI:44337"/>
        <dbReference type="ChEBI" id="CHEBI:57936"/>
        <dbReference type="ChEBI" id="CHEBI:456216"/>
        <dbReference type="EC" id="2.7.2.8"/>
    </reaction>
</comment>
<comment type="pathway">
    <text evidence="1">Amino-acid biosynthesis; L-arginine biosynthesis; N(2)-acetyl-L-ornithine from L-glutamate: step 2/4.</text>
</comment>
<comment type="subcellular location">
    <subcellularLocation>
        <location evidence="1">Cytoplasm</location>
    </subcellularLocation>
</comment>
<comment type="similarity">
    <text evidence="1">Belongs to the acetylglutamate kinase family. ArgB subfamily.</text>
</comment>
<proteinExistence type="inferred from homology"/>
<accession>Q5SGY0</accession>
<sequence>MSEALLVKVGGSLRGAEALLEELAAYPGPLVLVHGGGPEIGEWLKRLGYESRFVGGLRVTPPEQLEVVEMALYLTGKRLAWGLSRRGRKALALSGRDALCLRGRALPELGRVGEVVGVEVGLLLDLLEKGYTPLLAPIALDEEGPLNVNADTAAGAVAGALGWPAVFLTDVEGVYRNPKDPKTRFPRLTPKEVEALKEEGVIQGGMIPKVEAALAALRAGAPWAAVAKGERGVLRRLLSGEGGTLFSPS</sequence>
<evidence type="ECO:0000255" key="1">
    <source>
        <dbReference type="HAMAP-Rule" id="MF_00082"/>
    </source>
</evidence>
<name>ARGB_THET8</name>
<keyword id="KW-0028">Amino-acid biosynthesis</keyword>
<keyword id="KW-0055">Arginine biosynthesis</keyword>
<keyword id="KW-0067">ATP-binding</keyword>
<keyword id="KW-0963">Cytoplasm</keyword>
<keyword id="KW-0418">Kinase</keyword>
<keyword id="KW-0547">Nucleotide-binding</keyword>
<keyword id="KW-1185">Reference proteome</keyword>
<keyword id="KW-0808">Transferase</keyword>